<reference key="1">
    <citation type="journal article" date="1998" name="Nature">
        <title>Deciphering the biology of Mycobacterium tuberculosis from the complete genome sequence.</title>
        <authorList>
            <person name="Cole S.T."/>
            <person name="Brosch R."/>
            <person name="Parkhill J."/>
            <person name="Garnier T."/>
            <person name="Churcher C.M."/>
            <person name="Harris D.E."/>
            <person name="Gordon S.V."/>
            <person name="Eiglmeier K."/>
            <person name="Gas S."/>
            <person name="Barry C.E. III"/>
            <person name="Tekaia F."/>
            <person name="Badcock K."/>
            <person name="Basham D."/>
            <person name="Brown D."/>
            <person name="Chillingworth T."/>
            <person name="Connor R."/>
            <person name="Davies R.M."/>
            <person name="Devlin K."/>
            <person name="Feltwell T."/>
            <person name="Gentles S."/>
            <person name="Hamlin N."/>
            <person name="Holroyd S."/>
            <person name="Hornsby T."/>
            <person name="Jagels K."/>
            <person name="Krogh A."/>
            <person name="McLean J."/>
            <person name="Moule S."/>
            <person name="Murphy L.D."/>
            <person name="Oliver S."/>
            <person name="Osborne J."/>
            <person name="Quail M.A."/>
            <person name="Rajandream M.A."/>
            <person name="Rogers J."/>
            <person name="Rutter S."/>
            <person name="Seeger K."/>
            <person name="Skelton S."/>
            <person name="Squares S."/>
            <person name="Squares R."/>
            <person name="Sulston J.E."/>
            <person name="Taylor K."/>
            <person name="Whitehead S."/>
            <person name="Barrell B.G."/>
        </authorList>
    </citation>
    <scope>NUCLEOTIDE SEQUENCE [LARGE SCALE GENOMIC DNA]</scope>
    <source>
        <strain>ATCC 25618 / H37Rv</strain>
    </source>
</reference>
<reference key="2">
    <citation type="journal article" date="2010" name="J. Biol. Chem.">
        <title>Noncognate Mycobacterium tuberculosis toxin-antitoxins can physically and functionally interact.</title>
        <authorList>
            <person name="Zhu L."/>
            <person name="Sharp J.D."/>
            <person name="Kobayashi H."/>
            <person name="Woychik N.A."/>
            <person name="Inouye M."/>
        </authorList>
    </citation>
    <scope>FUNCTION AS AN ANTITOXIN</scope>
    <scope>SUBUNIT</scope>
    <scope>INTERACTION WITH TOXINS MAZF6; MAZF9 AND VAPC40</scope>
    <source>
        <strain>ATCC 25618 / H37Rv</strain>
    </source>
</reference>
<reference key="3">
    <citation type="journal article" date="2011" name="Mol. Cell. Proteomics">
        <title>Proteogenomic analysis of Mycobacterium tuberculosis by high resolution mass spectrometry.</title>
        <authorList>
            <person name="Kelkar D.S."/>
            <person name="Kumar D."/>
            <person name="Kumar P."/>
            <person name="Balakrishnan L."/>
            <person name="Muthusamy B."/>
            <person name="Yadav A.K."/>
            <person name="Shrivastava P."/>
            <person name="Marimuthu A."/>
            <person name="Anand S."/>
            <person name="Sundaram H."/>
            <person name="Kingsbury R."/>
            <person name="Harsha H.C."/>
            <person name="Nair B."/>
            <person name="Prasad T.S."/>
            <person name="Chauhan D.S."/>
            <person name="Katoch K."/>
            <person name="Katoch V.M."/>
            <person name="Kumar P."/>
            <person name="Chaerkady R."/>
            <person name="Ramachandran S."/>
            <person name="Dash D."/>
            <person name="Pandey A."/>
        </authorList>
    </citation>
    <scope>IDENTIFICATION BY MASS SPECTROMETRY [LARGE SCALE ANALYSIS]</scope>
    <source>
        <strain>ATCC 25618 / H37Rv</strain>
    </source>
</reference>
<comment type="function">
    <text evidence="2">Antitoxin component of a type II toxin-antitoxin (TA) system. Its cognate toxin is VapC40. Upon expression in E.coli partially counteracts the ribonuclease activity of non-cognate toxins MazF6 and MazF9.</text>
</comment>
<comment type="subunit">
    <text evidence="2">Physically interacts with cognate toxin VapC40.</text>
</comment>
<comment type="similarity">
    <text evidence="3">Belongs to the VapB family.</text>
</comment>
<evidence type="ECO:0000255" key="1">
    <source>
        <dbReference type="PROSITE-ProRule" id="PRU01076"/>
    </source>
</evidence>
<evidence type="ECO:0000269" key="2">
    <source>
    </source>
</evidence>
<evidence type="ECO:0000305" key="3"/>
<feature type="chain" id="PRO_0000104063" description="Antitoxin VapB40">
    <location>
        <begin position="1"/>
        <end position="81"/>
    </location>
</feature>
<feature type="domain" description="SpoVT-AbrB" evidence="1">
    <location>
        <begin position="1"/>
        <end position="45"/>
    </location>
</feature>
<accession>P9WFC3</accession>
<accession>L0TAC2</accession>
<accession>P65027</accession>
<accession>Q50626</accession>
<organism>
    <name type="scientific">Mycobacterium tuberculosis (strain ATCC 25618 / H37Rv)</name>
    <dbReference type="NCBI Taxonomy" id="83332"/>
    <lineage>
        <taxon>Bacteria</taxon>
        <taxon>Bacillati</taxon>
        <taxon>Actinomycetota</taxon>
        <taxon>Actinomycetes</taxon>
        <taxon>Mycobacteriales</taxon>
        <taxon>Mycobacteriaceae</taxon>
        <taxon>Mycobacterium</taxon>
        <taxon>Mycobacterium tuberculosis complex</taxon>
    </lineage>
</organism>
<proteinExistence type="evidence at protein level"/>
<name>VPB40_MYCTU</name>
<protein>
    <recommendedName>
        <fullName>Antitoxin VapB40</fullName>
    </recommendedName>
</protein>
<gene>
    <name type="primary">vapB40</name>
    <name type="synonym">vapB-mt25</name>
    <name type="ordered locus">Rv2595</name>
    <name type="ORF">MTCY227.06c</name>
</gene>
<sequence length="81" mass="9250">MRTTIDVAGRLVIPKRIRERLGLRGNDQVEITERDGRIEIEPAPTGVELVREGSVLVARPERPLPPLTDEIVRETLDRTRR</sequence>
<dbReference type="EMBL" id="AL123456">
    <property type="protein sequence ID" value="CCP45391.1"/>
    <property type="molecule type" value="Genomic_DNA"/>
</dbReference>
<dbReference type="PIR" id="B70727">
    <property type="entry name" value="B70727"/>
</dbReference>
<dbReference type="RefSeq" id="NP_217111.1">
    <property type="nucleotide sequence ID" value="NC_000962.3"/>
</dbReference>
<dbReference type="RefSeq" id="WP_003413429.1">
    <property type="nucleotide sequence ID" value="NZ_NVQJ01000023.1"/>
</dbReference>
<dbReference type="SMR" id="P9WFC3"/>
<dbReference type="STRING" id="83332.Rv2595"/>
<dbReference type="PaxDb" id="83332-Rv2595"/>
<dbReference type="DNASU" id="887682"/>
<dbReference type="GeneID" id="887682"/>
<dbReference type="KEGG" id="mtu:Rv2595"/>
<dbReference type="KEGG" id="mtv:RVBD_2595"/>
<dbReference type="TubercuList" id="Rv2595"/>
<dbReference type="eggNOG" id="COG2002">
    <property type="taxonomic scope" value="Bacteria"/>
</dbReference>
<dbReference type="InParanoid" id="P9WFC3"/>
<dbReference type="OrthoDB" id="33406at2"/>
<dbReference type="PhylomeDB" id="P9WFC3"/>
<dbReference type="Proteomes" id="UP000001584">
    <property type="component" value="Chromosome"/>
</dbReference>
<dbReference type="GO" id="GO:0003677">
    <property type="term" value="F:DNA binding"/>
    <property type="evidence" value="ECO:0007669"/>
    <property type="project" value="UniProtKB-KW"/>
</dbReference>
<dbReference type="Gene3D" id="2.10.260.10">
    <property type="match status" value="1"/>
</dbReference>
<dbReference type="InterPro" id="IPR007159">
    <property type="entry name" value="SpoVT-AbrB_dom"/>
</dbReference>
<dbReference type="InterPro" id="IPR037914">
    <property type="entry name" value="SpoVT-AbrB_sf"/>
</dbReference>
<dbReference type="NCBIfam" id="TIGR01439">
    <property type="entry name" value="lp_hng_hel_AbrB"/>
    <property type="match status" value="1"/>
</dbReference>
<dbReference type="Pfam" id="PF04014">
    <property type="entry name" value="MazE_antitoxin"/>
    <property type="match status" value="1"/>
</dbReference>
<dbReference type="SMART" id="SM00966">
    <property type="entry name" value="SpoVT_AbrB"/>
    <property type="match status" value="1"/>
</dbReference>
<dbReference type="SUPFAM" id="SSF89447">
    <property type="entry name" value="AbrB/MazE/MraZ-like"/>
    <property type="match status" value="1"/>
</dbReference>
<dbReference type="PROSITE" id="PS51740">
    <property type="entry name" value="SPOVT_ABRB"/>
    <property type="match status" value="1"/>
</dbReference>
<keyword id="KW-0238">DNA-binding</keyword>
<keyword id="KW-1185">Reference proteome</keyword>
<keyword id="KW-1277">Toxin-antitoxin system</keyword>